<reference key="1">
    <citation type="journal article" date="1997" name="Nat. Genet.">
        <title>The mitochondrial genome of Arabidopsis thaliana contains 57 genes in 366,924 nucleotides.</title>
        <authorList>
            <person name="Unseld M."/>
            <person name="Marienfeld J.R."/>
            <person name="Brandt P."/>
            <person name="Brennicke A."/>
        </authorList>
    </citation>
    <scope>NUCLEOTIDE SEQUENCE [LARGE SCALE GENOMIC DNA]</scope>
    <source>
        <strain>cv. C24</strain>
    </source>
</reference>
<reference key="2">
    <citation type="journal article" date="2018" name="Plant Cell">
        <title>Correction of persistent errors in Arabidopsis reference mitochondrial genomes.</title>
        <authorList>
            <person name="Sloan D.B."/>
            <person name="Wu Z."/>
            <person name="Sharbrough J."/>
        </authorList>
    </citation>
    <scope>NUCLEOTIDE SEQUENCE [LARGE SCALE GENOMIC DNA]</scope>
    <source>
        <strain>cv. Columbia</strain>
    </source>
</reference>
<reference key="3">
    <citation type="journal article" date="1999" name="Nature">
        <title>Sequence and analysis of chromosome 2 of the plant Arabidopsis thaliana.</title>
        <authorList>
            <person name="Lin X."/>
            <person name="Kaul S."/>
            <person name="Rounsley S.D."/>
            <person name="Shea T.P."/>
            <person name="Benito M.-I."/>
            <person name="Town C.D."/>
            <person name="Fujii C.Y."/>
            <person name="Mason T.M."/>
            <person name="Bowman C.L."/>
            <person name="Barnstead M.E."/>
            <person name="Feldblyum T.V."/>
            <person name="Buell C.R."/>
            <person name="Ketchum K.A."/>
            <person name="Lee J.J."/>
            <person name="Ronning C.M."/>
            <person name="Koo H.L."/>
            <person name="Moffat K.S."/>
            <person name="Cronin L.A."/>
            <person name="Shen M."/>
            <person name="Pai G."/>
            <person name="Van Aken S."/>
            <person name="Umayam L."/>
            <person name="Tallon L.J."/>
            <person name="Gill J.E."/>
            <person name="Adams M.D."/>
            <person name="Carrera A.J."/>
            <person name="Creasy T.H."/>
            <person name="Goodman H.M."/>
            <person name="Somerville C.R."/>
            <person name="Copenhaver G.P."/>
            <person name="Preuss D."/>
            <person name="Nierman W.C."/>
            <person name="White O."/>
            <person name="Eisen J.A."/>
            <person name="Salzberg S.L."/>
            <person name="Fraser C.M."/>
            <person name="Venter J.C."/>
        </authorList>
    </citation>
    <scope>NUCLEOTIDE SEQUENCE [LARGE SCALE GENOMIC DNA] (AT2G07682)</scope>
    <source>
        <strain>cv. Columbia</strain>
    </source>
</reference>
<reference key="4">
    <citation type="submission" date="2004-06" db="EMBL/GenBank/DDBJ databases">
        <authorList>
            <person name="Underwood B.A."/>
            <person name="Xiao Y.-L."/>
            <person name="Moskal W.A. Jr."/>
            <person name="Monaghan E.L."/>
            <person name="Wang W."/>
            <person name="Redman J.C."/>
            <person name="Wu H.C."/>
            <person name="Utterback T."/>
            <person name="Town C.D."/>
        </authorList>
    </citation>
    <scope>NUCLEOTIDE SEQUENCE [LARGE SCALE GENOMIC DNA] (AT2G07682)</scope>
    <source>
        <strain>cv. Columbia</strain>
    </source>
</reference>
<reference key="5">
    <citation type="journal article" date="2005" name="Plant Physiol.">
        <title>Analysis of the cDNAs of hypothetical genes on Arabidopsis chromosome 2 reveals numerous transcript variants.</title>
        <authorList>
            <person name="Xiao Y.-L."/>
            <person name="Smith S.R."/>
            <person name="Ishmael N."/>
            <person name="Redman J.C."/>
            <person name="Kumar N."/>
            <person name="Monaghan E.L."/>
            <person name="Ayele M."/>
            <person name="Haas B.J."/>
            <person name="Wu H.C."/>
            <person name="Town C.D."/>
        </authorList>
    </citation>
    <scope>NUCLEOTIDE SEQUENCE [LARGE SCALE MRNA] (AT2G07682)</scope>
    <source>
        <strain>cv. Columbia</strain>
    </source>
</reference>
<evidence type="ECO:0000256" key="1">
    <source>
        <dbReference type="SAM" id="MobiDB-lite"/>
    </source>
</evidence>
<evidence type="ECO:0000305" key="2"/>
<comment type="subcellular location">
    <subcellularLocation>
        <location evidence="2">Mitochondrion</location>
    </subcellularLocation>
</comment>
<comment type="miscellaneous">
    <text>A stretch of 270 kb of the mitochondrial genome is duplicated within the centromere of chromosome 2 resulting in the duplication of the gene. The expression of this duplicated gene (At2g07682) is demonstrated.</text>
</comment>
<comment type="sequence caution" evidence="2">
    <conflict type="frameshift">
        <sequence resource="EMBL-CDS" id="AAO11663"/>
    </conflict>
</comment>
<comment type="sequence caution" evidence="2">
    <conflict type="frameshift">
        <sequence resource="EMBL-CDS" id="AAT69181"/>
    </conflict>
</comment>
<comment type="sequence caution" evidence="2">
    <conflict type="frameshift">
        <sequence resource="EMBL" id="AC007143"/>
    </conflict>
</comment>
<comment type="sequence caution" evidence="2">
    <conflict type="frameshift">
        <sequence resource="EMBL" id="AC007730"/>
    </conflict>
</comment>
<protein>
    <recommendedName>
        <fullName>Uncharacterized mitochondrial protein AtMg00880</fullName>
    </recommendedName>
    <alternativeName>
        <fullName>ORF187</fullName>
    </alternativeName>
</protein>
<geneLocation type="mitochondrion"/>
<organism>
    <name type="scientific">Arabidopsis thaliana</name>
    <name type="common">Mouse-ear cress</name>
    <dbReference type="NCBI Taxonomy" id="3702"/>
    <lineage>
        <taxon>Eukaryota</taxon>
        <taxon>Viridiplantae</taxon>
        <taxon>Streptophyta</taxon>
        <taxon>Embryophyta</taxon>
        <taxon>Tracheophyta</taxon>
        <taxon>Spermatophyta</taxon>
        <taxon>Magnoliopsida</taxon>
        <taxon>eudicotyledons</taxon>
        <taxon>Gunneridae</taxon>
        <taxon>Pentapetalae</taxon>
        <taxon>rosids</taxon>
        <taxon>malvids</taxon>
        <taxon>Brassicales</taxon>
        <taxon>Brassicaceae</taxon>
        <taxon>Camelineae</taxon>
        <taxon>Arabidopsis</taxon>
    </lineage>
</organism>
<sequence length="187" mass="21218">MTTMKRSADPEAEEDPDPSLGKFIEQVVSGPTQKGFPASGAFATPRARRSRGPKRFLGKRNYRRARARKPGKRDRAHSSKVRSSDGSTRPSARYGMRFRSPTLPLCSRPRTWEFLLDLGYDSMSLKSARVASERPCDPGRANHVWEPGGLSPEQAQWDWVGKVYSRDRVLKLMGELHELVYRESGRR</sequence>
<proteinExistence type="evidence at transcript level"/>
<dbReference type="EMBL" id="Y08501">
    <property type="protein sequence ID" value="CAA69829.1"/>
    <property type="molecule type" value="Genomic_DNA"/>
</dbReference>
<dbReference type="EMBL" id="BK010421">
    <property type="status" value="NOT_ANNOTATED_CDS"/>
    <property type="molecule type" value="Genomic_DNA"/>
</dbReference>
<dbReference type="EMBL" id="AC007143">
    <property type="status" value="NOT_ANNOTATED_CDS"/>
    <property type="molecule type" value="Genomic_DNA"/>
</dbReference>
<dbReference type="EMBL" id="AC007730">
    <property type="status" value="NOT_ANNOTATED_CDS"/>
    <property type="molecule type" value="Genomic_DNA"/>
</dbReference>
<dbReference type="EMBL" id="AY649264">
    <property type="protein sequence ID" value="AAT69181.1"/>
    <property type="status" value="ALT_FRAME"/>
    <property type="molecule type" value="Genomic_DNA"/>
</dbReference>
<dbReference type="EMBL" id="AY168992">
    <property type="protein sequence ID" value="AAO11663.1"/>
    <property type="status" value="ALT_FRAME"/>
    <property type="molecule type" value="mRNA"/>
</dbReference>
<dbReference type="RefSeq" id="NP_085544.1">
    <property type="nucleotide sequence ID" value="NC_001284.2"/>
</dbReference>
<dbReference type="STRING" id="3702.P92524"/>
<dbReference type="PaxDb" id="3702-ATMG00880.1"/>
<dbReference type="EnsemblPlants" id="ATMG00880.1">
    <property type="protein sequence ID" value="ATMG00880.1"/>
    <property type="gene ID" value="ATMG00880"/>
</dbReference>
<dbReference type="Gramene" id="ATMG00880.1">
    <property type="protein sequence ID" value="ATMG00880.1"/>
    <property type="gene ID" value="ATMG00880"/>
</dbReference>
<dbReference type="Araport" id="ATMG00880"/>
<dbReference type="TAIR" id="ATMG00880">
    <property type="gene designation" value="ORF187"/>
</dbReference>
<dbReference type="HOGENOM" id="CLU_1449571_0_0_1"/>
<dbReference type="InParanoid" id="P92524"/>
<dbReference type="OMA" id="PSARYGM"/>
<dbReference type="PRO" id="PR:P92524"/>
<dbReference type="Proteomes" id="UP000006548">
    <property type="component" value="Mitochondrion MT"/>
</dbReference>
<dbReference type="ExpressionAtlas" id="P92524">
    <property type="expression patterns" value="baseline and differential"/>
</dbReference>
<dbReference type="GO" id="GO:0005739">
    <property type="term" value="C:mitochondrion"/>
    <property type="evidence" value="ECO:0007669"/>
    <property type="project" value="UniProtKB-SubCell"/>
</dbReference>
<keyword id="KW-0496">Mitochondrion</keyword>
<keyword id="KW-1185">Reference proteome</keyword>
<accession>P92524</accession>
<accession>Q1ZXY8</accession>
<accession>Q6DR51</accession>
<accession>Q8GUT8</accession>
<feature type="chain" id="PRO_0000196798" description="Uncharacterized mitochondrial protein AtMg00880">
    <location>
        <begin position="1"/>
        <end position="187"/>
    </location>
</feature>
<feature type="region of interest" description="Disordered" evidence="1">
    <location>
        <begin position="1"/>
        <end position="95"/>
    </location>
</feature>
<feature type="compositionally biased region" description="Basic residues" evidence="1">
    <location>
        <begin position="46"/>
        <end position="80"/>
    </location>
</feature>
<name>M880_ARATH</name>
<gene>
    <name type="ordered locus">AtMg00880</name>
</gene>